<comment type="function">
    <text evidence="1">Catalyzes the decarboxylation of four acetate groups of uroporphyrinogen-III to yield coproporphyrinogen-III.</text>
</comment>
<comment type="catalytic activity">
    <reaction evidence="1">
        <text>uroporphyrinogen III + 4 H(+) = coproporphyrinogen III + 4 CO2</text>
        <dbReference type="Rhea" id="RHEA:19865"/>
        <dbReference type="ChEBI" id="CHEBI:15378"/>
        <dbReference type="ChEBI" id="CHEBI:16526"/>
        <dbReference type="ChEBI" id="CHEBI:57308"/>
        <dbReference type="ChEBI" id="CHEBI:57309"/>
        <dbReference type="EC" id="4.1.1.37"/>
    </reaction>
</comment>
<comment type="pathway">
    <text evidence="1">Porphyrin-containing compound metabolism; protoporphyrin-IX biosynthesis; coproporphyrinogen-III from 5-aminolevulinate: step 4/4.</text>
</comment>
<comment type="subunit">
    <text evidence="1">Homodimer.</text>
</comment>
<comment type="subcellular location">
    <subcellularLocation>
        <location evidence="1">Cytoplasm</location>
    </subcellularLocation>
</comment>
<comment type="similarity">
    <text evidence="1">Belongs to the uroporphyrinogen decarboxylase family.</text>
</comment>
<name>DCUP_THISH</name>
<feature type="chain" id="PRO_1000197542" description="Uroporphyrinogen decarboxylase">
    <location>
        <begin position="1"/>
        <end position="351"/>
    </location>
</feature>
<feature type="binding site" evidence="1">
    <location>
        <begin position="27"/>
        <end position="31"/>
    </location>
    <ligand>
        <name>substrate</name>
    </ligand>
</feature>
<feature type="binding site" evidence="1">
    <location>
        <position position="77"/>
    </location>
    <ligand>
        <name>substrate</name>
    </ligand>
</feature>
<feature type="binding site" evidence="1">
    <location>
        <position position="154"/>
    </location>
    <ligand>
        <name>substrate</name>
    </ligand>
</feature>
<feature type="binding site" evidence="1">
    <location>
        <position position="209"/>
    </location>
    <ligand>
        <name>substrate</name>
    </ligand>
</feature>
<feature type="binding site" evidence="1">
    <location>
        <position position="327"/>
    </location>
    <ligand>
        <name>substrate</name>
    </ligand>
</feature>
<feature type="site" description="Transition state stabilizer" evidence="1">
    <location>
        <position position="77"/>
    </location>
</feature>
<gene>
    <name evidence="1" type="primary">hemE</name>
    <name type="ordered locus">Tgr7_3020</name>
</gene>
<organism>
    <name type="scientific">Thioalkalivibrio sulfidiphilus (strain HL-EbGR7)</name>
    <dbReference type="NCBI Taxonomy" id="396588"/>
    <lineage>
        <taxon>Bacteria</taxon>
        <taxon>Pseudomonadati</taxon>
        <taxon>Pseudomonadota</taxon>
        <taxon>Gammaproteobacteria</taxon>
        <taxon>Chromatiales</taxon>
        <taxon>Ectothiorhodospiraceae</taxon>
        <taxon>Thioalkalivibrio</taxon>
    </lineage>
</organism>
<dbReference type="EC" id="4.1.1.37" evidence="1"/>
<dbReference type="EMBL" id="CP001339">
    <property type="protein sequence ID" value="ACL74090.1"/>
    <property type="molecule type" value="Genomic_DNA"/>
</dbReference>
<dbReference type="RefSeq" id="WP_012639553.1">
    <property type="nucleotide sequence ID" value="NC_011901.1"/>
</dbReference>
<dbReference type="SMR" id="B8GPU3"/>
<dbReference type="STRING" id="396588.Tgr7_3020"/>
<dbReference type="KEGG" id="tgr:Tgr7_3020"/>
<dbReference type="eggNOG" id="COG0407">
    <property type="taxonomic scope" value="Bacteria"/>
</dbReference>
<dbReference type="HOGENOM" id="CLU_040933_0_0_6"/>
<dbReference type="OrthoDB" id="9806656at2"/>
<dbReference type="UniPathway" id="UPA00251">
    <property type="reaction ID" value="UER00321"/>
</dbReference>
<dbReference type="Proteomes" id="UP000002383">
    <property type="component" value="Chromosome"/>
</dbReference>
<dbReference type="GO" id="GO:0005829">
    <property type="term" value="C:cytosol"/>
    <property type="evidence" value="ECO:0007669"/>
    <property type="project" value="TreeGrafter"/>
</dbReference>
<dbReference type="GO" id="GO:0004853">
    <property type="term" value="F:uroporphyrinogen decarboxylase activity"/>
    <property type="evidence" value="ECO:0007669"/>
    <property type="project" value="UniProtKB-UniRule"/>
</dbReference>
<dbReference type="GO" id="GO:0019353">
    <property type="term" value="P:protoporphyrinogen IX biosynthetic process from glutamate"/>
    <property type="evidence" value="ECO:0007669"/>
    <property type="project" value="TreeGrafter"/>
</dbReference>
<dbReference type="CDD" id="cd00717">
    <property type="entry name" value="URO-D"/>
    <property type="match status" value="1"/>
</dbReference>
<dbReference type="FunFam" id="3.20.20.210:FF:000001">
    <property type="entry name" value="Uroporphyrinogen decarboxylase"/>
    <property type="match status" value="1"/>
</dbReference>
<dbReference type="Gene3D" id="3.20.20.210">
    <property type="match status" value="1"/>
</dbReference>
<dbReference type="HAMAP" id="MF_00218">
    <property type="entry name" value="URO_D"/>
    <property type="match status" value="1"/>
</dbReference>
<dbReference type="InterPro" id="IPR038071">
    <property type="entry name" value="UROD/MetE-like_sf"/>
</dbReference>
<dbReference type="InterPro" id="IPR006361">
    <property type="entry name" value="Uroporphyrinogen_deCO2ase_HemE"/>
</dbReference>
<dbReference type="InterPro" id="IPR000257">
    <property type="entry name" value="Uroporphyrinogen_deCOase"/>
</dbReference>
<dbReference type="NCBIfam" id="TIGR01464">
    <property type="entry name" value="hemE"/>
    <property type="match status" value="1"/>
</dbReference>
<dbReference type="PANTHER" id="PTHR21091">
    <property type="entry name" value="METHYLTETRAHYDROFOLATE:HOMOCYSTEINE METHYLTRANSFERASE RELATED"/>
    <property type="match status" value="1"/>
</dbReference>
<dbReference type="PANTHER" id="PTHR21091:SF169">
    <property type="entry name" value="UROPORPHYRINOGEN DECARBOXYLASE"/>
    <property type="match status" value="1"/>
</dbReference>
<dbReference type="Pfam" id="PF01208">
    <property type="entry name" value="URO-D"/>
    <property type="match status" value="1"/>
</dbReference>
<dbReference type="SUPFAM" id="SSF51726">
    <property type="entry name" value="UROD/MetE-like"/>
    <property type="match status" value="1"/>
</dbReference>
<dbReference type="PROSITE" id="PS00906">
    <property type="entry name" value="UROD_1"/>
    <property type="match status" value="1"/>
</dbReference>
<dbReference type="PROSITE" id="PS00907">
    <property type="entry name" value="UROD_2"/>
    <property type="match status" value="1"/>
</dbReference>
<accession>B8GPU3</accession>
<protein>
    <recommendedName>
        <fullName evidence="1">Uroporphyrinogen decarboxylase</fullName>
        <shortName evidence="1">UPD</shortName>
        <shortName evidence="1">URO-D</shortName>
        <ecNumber evidence="1">4.1.1.37</ecNumber>
    </recommendedName>
</protein>
<sequence length="351" mass="38448">MNELKNDRLLRALLREPVDTTPVWIMRQAGRYLPEYRATRARAGSFMDLCQSPEMACEVTLQPLERFPLDAAILFSDILTIPDAMGLGLYFSEGEGPRFERPVQDAAAIRALGVPDPETELRYVTDAVRLIRRELDGRVPLIGFSGSPWTLATYMVEGGSSKEFARIKGMLYDDPSTLHHLLGVLAEAVTVYLNAQIAAGAQAVMVFDTWGGSLTPEGYREFSLAYMQRIVAGLTREHEGRRVPVTLFTKGGGAWLEVMAETGCDALGLDWTVNIGEARRRVGDRVALQGNLDPAVLYASAERVRAAARKVVEDFGPGSGHVFNLGHGIHPGIDPEKVAALVDEVHKAGMK</sequence>
<proteinExistence type="inferred from homology"/>
<reference key="1">
    <citation type="journal article" date="2011" name="Stand. Genomic Sci.">
        <title>Complete genome sequence of 'Thioalkalivibrio sulfidophilus' HL-EbGr7.</title>
        <authorList>
            <person name="Muyzer G."/>
            <person name="Sorokin D.Y."/>
            <person name="Mavromatis K."/>
            <person name="Lapidus A."/>
            <person name="Clum A."/>
            <person name="Ivanova N."/>
            <person name="Pati A."/>
            <person name="d'Haeseleer P."/>
            <person name="Woyke T."/>
            <person name="Kyrpides N.C."/>
        </authorList>
    </citation>
    <scope>NUCLEOTIDE SEQUENCE [LARGE SCALE GENOMIC DNA]</scope>
    <source>
        <strain>HL-EbGR7</strain>
    </source>
</reference>
<keyword id="KW-0963">Cytoplasm</keyword>
<keyword id="KW-0210">Decarboxylase</keyword>
<keyword id="KW-0456">Lyase</keyword>
<keyword id="KW-0627">Porphyrin biosynthesis</keyword>
<keyword id="KW-1185">Reference proteome</keyword>
<evidence type="ECO:0000255" key="1">
    <source>
        <dbReference type="HAMAP-Rule" id="MF_00218"/>
    </source>
</evidence>